<evidence type="ECO:0000255" key="1">
    <source>
        <dbReference type="HAMAP-Rule" id="MF_00154"/>
    </source>
</evidence>
<sequence>MTATFIKTSRGKSPASLSSVGDYVQLLKPRIMCLVVFTAITGMLIAPGTIHPLIGLVSTVCVALGAGAAGAFNMWYDSDIDAIMDRTKGRPIPAGKICREQAWECGMVLATLSVFVMAIAVNYVSALLLAGSIFSYAVVYTMLLKRRTPQNIVIGGIAGAFPPVIGWASVSGTLSLESLSLFAIIFVWTPPHFWAIALLTLEEYKKANVPMLPVYCIRKTRSHILLYSIILAVVGATPGLFVKHPVLYEILATGLSATFIAYAIAVFREKGQPSHKACMGLFKYSIYYLFLLFAVVIACVH</sequence>
<comment type="function">
    <text evidence="1">Converts heme B (protoheme IX) to heme O by substitution of the vinyl group on carbon 2 of heme B porphyrin ring with a hydroxyethyl farnesyl side group.</text>
</comment>
<comment type="catalytic activity">
    <reaction evidence="1">
        <text>heme b + (2E,6E)-farnesyl diphosphate + H2O = Fe(II)-heme o + diphosphate</text>
        <dbReference type="Rhea" id="RHEA:28070"/>
        <dbReference type="ChEBI" id="CHEBI:15377"/>
        <dbReference type="ChEBI" id="CHEBI:33019"/>
        <dbReference type="ChEBI" id="CHEBI:60344"/>
        <dbReference type="ChEBI" id="CHEBI:60530"/>
        <dbReference type="ChEBI" id="CHEBI:175763"/>
        <dbReference type="EC" id="2.5.1.141"/>
    </reaction>
</comment>
<comment type="pathway">
    <text evidence="1">Porphyrin-containing compound metabolism; heme O biosynthesis; heme O from protoheme: step 1/1.</text>
</comment>
<comment type="subcellular location">
    <subcellularLocation>
        <location evidence="1">Cell inner membrane</location>
        <topology evidence="1">Multi-pass membrane protein</topology>
    </subcellularLocation>
</comment>
<comment type="miscellaneous">
    <text evidence="1">Carbon 2 of the heme B porphyrin ring is defined according to the Fischer nomenclature.</text>
</comment>
<comment type="similarity">
    <text evidence="1">Belongs to the UbiA prenyltransferase family. Protoheme IX farnesyltransferase subfamily.</text>
</comment>
<name>COXX_ANAMF</name>
<proteinExistence type="inferred from homology"/>
<dbReference type="EC" id="2.5.1.141" evidence="1"/>
<dbReference type="EMBL" id="CP001079">
    <property type="protein sequence ID" value="ACM49600.1"/>
    <property type="molecule type" value="Genomic_DNA"/>
</dbReference>
<dbReference type="SMR" id="B9KGP6"/>
<dbReference type="STRING" id="320483.AMF_768"/>
<dbReference type="GeneID" id="7398281"/>
<dbReference type="KEGG" id="amf:AMF_768"/>
<dbReference type="eggNOG" id="COG0109">
    <property type="taxonomic scope" value="Bacteria"/>
</dbReference>
<dbReference type="HOGENOM" id="CLU_029631_0_2_5"/>
<dbReference type="UniPathway" id="UPA00834">
    <property type="reaction ID" value="UER00712"/>
</dbReference>
<dbReference type="Proteomes" id="UP000007307">
    <property type="component" value="Chromosome"/>
</dbReference>
<dbReference type="GO" id="GO:0005886">
    <property type="term" value="C:plasma membrane"/>
    <property type="evidence" value="ECO:0007669"/>
    <property type="project" value="UniProtKB-SubCell"/>
</dbReference>
<dbReference type="GO" id="GO:0008495">
    <property type="term" value="F:protoheme IX farnesyltransferase activity"/>
    <property type="evidence" value="ECO:0007669"/>
    <property type="project" value="UniProtKB-UniRule"/>
</dbReference>
<dbReference type="GO" id="GO:0048034">
    <property type="term" value="P:heme O biosynthetic process"/>
    <property type="evidence" value="ECO:0007669"/>
    <property type="project" value="UniProtKB-UniRule"/>
</dbReference>
<dbReference type="CDD" id="cd13957">
    <property type="entry name" value="PT_UbiA_Cox10"/>
    <property type="match status" value="1"/>
</dbReference>
<dbReference type="Gene3D" id="1.10.357.140">
    <property type="entry name" value="UbiA prenyltransferase"/>
    <property type="match status" value="1"/>
</dbReference>
<dbReference type="HAMAP" id="MF_00154">
    <property type="entry name" value="CyoE_CtaB"/>
    <property type="match status" value="1"/>
</dbReference>
<dbReference type="InterPro" id="IPR006369">
    <property type="entry name" value="Protohaem_IX_farnesylTrfase"/>
</dbReference>
<dbReference type="InterPro" id="IPR000537">
    <property type="entry name" value="UbiA_prenyltransferase"/>
</dbReference>
<dbReference type="InterPro" id="IPR030470">
    <property type="entry name" value="UbiA_prenylTrfase_CS"/>
</dbReference>
<dbReference type="InterPro" id="IPR044878">
    <property type="entry name" value="UbiA_sf"/>
</dbReference>
<dbReference type="NCBIfam" id="TIGR01473">
    <property type="entry name" value="cyoE_ctaB"/>
    <property type="match status" value="1"/>
</dbReference>
<dbReference type="NCBIfam" id="NF003349">
    <property type="entry name" value="PRK04375.1-2"/>
    <property type="match status" value="1"/>
</dbReference>
<dbReference type="PANTHER" id="PTHR43448:SF7">
    <property type="entry name" value="4-HYDROXYBENZOATE SOLANESYLTRANSFERASE"/>
    <property type="match status" value="1"/>
</dbReference>
<dbReference type="PANTHER" id="PTHR43448">
    <property type="entry name" value="PROTOHEME IX FARNESYLTRANSFERASE, MITOCHONDRIAL"/>
    <property type="match status" value="1"/>
</dbReference>
<dbReference type="Pfam" id="PF01040">
    <property type="entry name" value="UbiA"/>
    <property type="match status" value="1"/>
</dbReference>
<dbReference type="PROSITE" id="PS00943">
    <property type="entry name" value="UBIA"/>
    <property type="match status" value="1"/>
</dbReference>
<gene>
    <name evidence="1" type="primary">ctaB</name>
    <name type="ordered locus">AMF_768</name>
</gene>
<accession>B9KGP6</accession>
<organism>
    <name type="scientific">Anaplasma marginale (strain Florida)</name>
    <dbReference type="NCBI Taxonomy" id="320483"/>
    <lineage>
        <taxon>Bacteria</taxon>
        <taxon>Pseudomonadati</taxon>
        <taxon>Pseudomonadota</taxon>
        <taxon>Alphaproteobacteria</taxon>
        <taxon>Rickettsiales</taxon>
        <taxon>Anaplasmataceae</taxon>
        <taxon>Anaplasma</taxon>
    </lineage>
</organism>
<feature type="chain" id="PRO_1000199635" description="Protoheme IX farnesyltransferase">
    <location>
        <begin position="1"/>
        <end position="301"/>
    </location>
</feature>
<feature type="transmembrane region" description="Helical" evidence="1">
    <location>
        <begin position="34"/>
        <end position="54"/>
    </location>
</feature>
<feature type="transmembrane region" description="Helical" evidence="1">
    <location>
        <begin position="55"/>
        <end position="75"/>
    </location>
</feature>
<feature type="transmembrane region" description="Helical" evidence="1">
    <location>
        <begin position="102"/>
        <end position="121"/>
    </location>
</feature>
<feature type="transmembrane region" description="Helical" evidence="1">
    <location>
        <begin position="125"/>
        <end position="144"/>
    </location>
</feature>
<feature type="transmembrane region" description="Helical" evidence="1">
    <location>
        <begin position="152"/>
        <end position="172"/>
    </location>
</feature>
<feature type="transmembrane region" description="Helical" evidence="1">
    <location>
        <begin position="181"/>
        <end position="201"/>
    </location>
</feature>
<feature type="transmembrane region" description="Helical" evidence="1">
    <location>
        <begin position="222"/>
        <end position="242"/>
    </location>
</feature>
<feature type="transmembrane region" description="Helical" evidence="1">
    <location>
        <begin position="247"/>
        <end position="267"/>
    </location>
</feature>
<feature type="transmembrane region" description="Helical" evidence="1">
    <location>
        <begin position="280"/>
        <end position="300"/>
    </location>
</feature>
<reference key="1">
    <citation type="journal article" date="2009" name="BMC Genomics">
        <title>Conservation in the face of diversity: multistrain analysis of an intracellular bacterium.</title>
        <authorList>
            <person name="Dark M.J."/>
            <person name="Herndon D.R."/>
            <person name="Kappmeyer L.S."/>
            <person name="Gonzales M.P."/>
            <person name="Nordeen E."/>
            <person name="Palmer G.H."/>
            <person name="Knowles D.P. Jr."/>
            <person name="Brayton K.A."/>
        </authorList>
    </citation>
    <scope>NUCLEOTIDE SEQUENCE [LARGE SCALE GENOMIC DNA]</scope>
    <source>
        <strain>Florida</strain>
    </source>
</reference>
<protein>
    <recommendedName>
        <fullName evidence="1">Protoheme IX farnesyltransferase</fullName>
        <ecNumber evidence="1">2.5.1.141</ecNumber>
    </recommendedName>
    <alternativeName>
        <fullName evidence="1">Heme B farnesyltransferase</fullName>
    </alternativeName>
    <alternativeName>
        <fullName evidence="1">Heme O synthase</fullName>
    </alternativeName>
</protein>
<keyword id="KW-0997">Cell inner membrane</keyword>
<keyword id="KW-1003">Cell membrane</keyword>
<keyword id="KW-0350">Heme biosynthesis</keyword>
<keyword id="KW-0472">Membrane</keyword>
<keyword id="KW-1185">Reference proteome</keyword>
<keyword id="KW-0808">Transferase</keyword>
<keyword id="KW-0812">Transmembrane</keyword>
<keyword id="KW-1133">Transmembrane helix</keyword>